<protein>
    <recommendedName>
        <fullName evidence="1">Probable sugar efflux transporter</fullName>
    </recommendedName>
</protein>
<feature type="chain" id="PRO_0000259256" description="Probable sugar efflux transporter">
    <location>
        <begin position="1"/>
        <end position="396"/>
    </location>
</feature>
<feature type="transmembrane region" description="Helical" evidence="1">
    <location>
        <begin position="15"/>
        <end position="35"/>
    </location>
</feature>
<feature type="transmembrane region" description="Helical" evidence="1">
    <location>
        <begin position="50"/>
        <end position="70"/>
    </location>
</feature>
<feature type="transmembrane region" description="Helical" evidence="1">
    <location>
        <begin position="81"/>
        <end position="101"/>
    </location>
</feature>
<feature type="transmembrane region" description="Helical" evidence="1">
    <location>
        <begin position="103"/>
        <end position="123"/>
    </location>
</feature>
<feature type="transmembrane region" description="Helical" evidence="1">
    <location>
        <begin position="136"/>
        <end position="156"/>
    </location>
</feature>
<feature type="transmembrane region" description="Helical" evidence="1">
    <location>
        <begin position="169"/>
        <end position="189"/>
    </location>
</feature>
<feature type="transmembrane region" description="Helical" evidence="1">
    <location>
        <begin position="202"/>
        <end position="222"/>
    </location>
</feature>
<feature type="transmembrane region" description="Helical" evidence="1">
    <location>
        <begin position="246"/>
        <end position="266"/>
    </location>
</feature>
<feature type="transmembrane region" description="Helical" evidence="1">
    <location>
        <begin position="275"/>
        <end position="295"/>
    </location>
</feature>
<feature type="transmembrane region" description="Helical" evidence="1">
    <location>
        <begin position="301"/>
        <end position="321"/>
    </location>
</feature>
<feature type="transmembrane region" description="Helical" evidence="1">
    <location>
        <begin position="333"/>
        <end position="353"/>
    </location>
</feature>
<feature type="transmembrane region" description="Helical" evidence="1">
    <location>
        <begin position="364"/>
        <end position="384"/>
    </location>
</feature>
<evidence type="ECO:0000255" key="1">
    <source>
        <dbReference type="HAMAP-Rule" id="MF_00517"/>
    </source>
</evidence>
<accession>Q5PN95</accession>
<proteinExistence type="inferred from homology"/>
<name>SOTB_SALPA</name>
<sequence length="396" mass="42354">MTINPVSRKVAWLRVVTLAIAAFIFNTTEFVPVGLLSDIAESFHMQTAQVGIMLTIYAWVVAVMSLPFMLLTSQMERRKLLICLFVLFIASHVLSFLAWNFTVLVISRIGIAFAHAIFWSITASLAIRLAPAGKRAQALSLIATGTALAMVLGLPIGRVVGQYFGWRTTFFAIGMGALITLLCLIKLLPKLPSEHSGSLKSLPLLFRCPALMSLYVLTVVVVTAHYTAYSYIEPFVQNVAGLSANFATVLLLLLGGAGIIGSLVFGKLGNRHASSLVSIAIALLVVCLLLLLPAADSEAHLAILSIFWGIAIMVIGLGMQVKVLALAPDATDVAMALFSGIFNIGIGAGALVGNQVSLHWSMSAIGYIGAIPACAALVWAVLIFRKWPVTLEEQPH</sequence>
<reference key="1">
    <citation type="journal article" date="2004" name="Nat. Genet.">
        <title>Comparison of genome degradation in Paratyphi A and Typhi, human-restricted serovars of Salmonella enterica that cause typhoid.</title>
        <authorList>
            <person name="McClelland M."/>
            <person name="Sanderson K.E."/>
            <person name="Clifton S.W."/>
            <person name="Latreille P."/>
            <person name="Porwollik S."/>
            <person name="Sabo A."/>
            <person name="Meyer R."/>
            <person name="Bieri T."/>
            <person name="Ozersky P."/>
            <person name="McLellan M."/>
            <person name="Harkins C.R."/>
            <person name="Wang C."/>
            <person name="Nguyen C."/>
            <person name="Berghoff A."/>
            <person name="Elliott G."/>
            <person name="Kohlberg S."/>
            <person name="Strong C."/>
            <person name="Du F."/>
            <person name="Carter J."/>
            <person name="Kremizki C."/>
            <person name="Layman D."/>
            <person name="Leonard S."/>
            <person name="Sun H."/>
            <person name="Fulton L."/>
            <person name="Nash W."/>
            <person name="Miner T."/>
            <person name="Minx P."/>
            <person name="Delehaunty K."/>
            <person name="Fronick C."/>
            <person name="Magrini V."/>
            <person name="Nhan M."/>
            <person name="Warren W."/>
            <person name="Florea L."/>
            <person name="Spieth J."/>
            <person name="Wilson R.K."/>
        </authorList>
    </citation>
    <scope>NUCLEOTIDE SEQUENCE [LARGE SCALE GENOMIC DNA]</scope>
    <source>
        <strain>ATCC 9150 / SARB42</strain>
    </source>
</reference>
<organism>
    <name type="scientific">Salmonella paratyphi A (strain ATCC 9150 / SARB42)</name>
    <dbReference type="NCBI Taxonomy" id="295319"/>
    <lineage>
        <taxon>Bacteria</taxon>
        <taxon>Pseudomonadati</taxon>
        <taxon>Pseudomonadota</taxon>
        <taxon>Gammaproteobacteria</taxon>
        <taxon>Enterobacterales</taxon>
        <taxon>Enterobacteriaceae</taxon>
        <taxon>Salmonella</taxon>
    </lineage>
</organism>
<comment type="function">
    <text evidence="1">Involved in the efflux of sugars. The physiological role may be the reduction of the intracellular concentration of toxic sugars or sugar metabolites.</text>
</comment>
<comment type="subcellular location">
    <subcellularLocation>
        <location evidence="1">Cell inner membrane</location>
        <topology evidence="1">Multi-pass membrane protein</topology>
    </subcellularLocation>
</comment>
<comment type="similarity">
    <text evidence="1">Belongs to the major facilitator superfamily. SotB (TC 2.A.1.2) family.</text>
</comment>
<gene>
    <name evidence="1" type="primary">sotB</name>
    <name type="ordered locus">SPA1333</name>
</gene>
<dbReference type="EMBL" id="CP000026">
    <property type="protein sequence ID" value="AAV77278.1"/>
    <property type="molecule type" value="Genomic_DNA"/>
</dbReference>
<dbReference type="RefSeq" id="WP_000154608.1">
    <property type="nucleotide sequence ID" value="NC_006511.1"/>
</dbReference>
<dbReference type="SMR" id="Q5PN95"/>
<dbReference type="KEGG" id="spt:SPA1333"/>
<dbReference type="HOGENOM" id="CLU_001265_61_2_6"/>
<dbReference type="Proteomes" id="UP000008185">
    <property type="component" value="Chromosome"/>
</dbReference>
<dbReference type="GO" id="GO:0005886">
    <property type="term" value="C:plasma membrane"/>
    <property type="evidence" value="ECO:0007669"/>
    <property type="project" value="UniProtKB-SubCell"/>
</dbReference>
<dbReference type="GO" id="GO:0015144">
    <property type="term" value="F:carbohydrate transmembrane transporter activity"/>
    <property type="evidence" value="ECO:0007669"/>
    <property type="project" value="UniProtKB-UniRule"/>
</dbReference>
<dbReference type="CDD" id="cd17324">
    <property type="entry name" value="MFS_NepI_like"/>
    <property type="match status" value="1"/>
</dbReference>
<dbReference type="Gene3D" id="1.20.1250.20">
    <property type="entry name" value="MFS general substrate transporter like domains"/>
    <property type="match status" value="1"/>
</dbReference>
<dbReference type="HAMAP" id="MF_00517">
    <property type="entry name" value="MFS_SotB"/>
    <property type="match status" value="1"/>
</dbReference>
<dbReference type="InterPro" id="IPR011701">
    <property type="entry name" value="MFS"/>
</dbReference>
<dbReference type="InterPro" id="IPR020846">
    <property type="entry name" value="MFS_dom"/>
</dbReference>
<dbReference type="InterPro" id="IPR050189">
    <property type="entry name" value="MFS_Efflux_Transporters"/>
</dbReference>
<dbReference type="InterPro" id="IPR036259">
    <property type="entry name" value="MFS_trans_sf"/>
</dbReference>
<dbReference type="InterPro" id="IPR023495">
    <property type="entry name" value="Sugar_effux_transptr_put"/>
</dbReference>
<dbReference type="NCBIfam" id="NF002921">
    <property type="entry name" value="PRK03545.1"/>
    <property type="match status" value="1"/>
</dbReference>
<dbReference type="PANTHER" id="PTHR43124">
    <property type="entry name" value="PURINE EFFLUX PUMP PBUE"/>
    <property type="match status" value="1"/>
</dbReference>
<dbReference type="PANTHER" id="PTHR43124:SF4">
    <property type="entry name" value="SUGAR EFFLUX TRANSPORTER"/>
    <property type="match status" value="1"/>
</dbReference>
<dbReference type="Pfam" id="PF07690">
    <property type="entry name" value="MFS_1"/>
    <property type="match status" value="1"/>
</dbReference>
<dbReference type="SUPFAM" id="SSF103473">
    <property type="entry name" value="MFS general substrate transporter"/>
    <property type="match status" value="1"/>
</dbReference>
<dbReference type="PROSITE" id="PS50850">
    <property type="entry name" value="MFS"/>
    <property type="match status" value="1"/>
</dbReference>
<keyword id="KW-0997">Cell inner membrane</keyword>
<keyword id="KW-1003">Cell membrane</keyword>
<keyword id="KW-0472">Membrane</keyword>
<keyword id="KW-0762">Sugar transport</keyword>
<keyword id="KW-0812">Transmembrane</keyword>
<keyword id="KW-1133">Transmembrane helix</keyword>
<keyword id="KW-0813">Transport</keyword>